<accession>Q46Y85</accession>
<comment type="function">
    <text evidence="1">This protein is located at the 30S-50S ribosomal subunit interface and may play a role in the structure and function of the aminoacyl-tRNA binding site.</text>
</comment>
<comment type="similarity">
    <text evidence="1">Belongs to the bacterial ribosomal protein bL19 family.</text>
</comment>
<name>RL19_CUPPJ</name>
<sequence>MNIIEQIEKEEIARLTANKTIPAFAPGDTVIVNVNVVEGNRKRVQAYEGVVIAKRNRGLNSSFIVRKISSGEGVERTFQLYSPLIAGIEVKRRGDVRRAKLYYLRERSGKSARIKEKLVSKAAKAAQ</sequence>
<reference key="1">
    <citation type="journal article" date="2010" name="PLoS ONE">
        <title>The complete multipartite genome sequence of Cupriavidus necator JMP134, a versatile pollutant degrader.</title>
        <authorList>
            <person name="Lykidis A."/>
            <person name="Perez-Pantoja D."/>
            <person name="Ledger T."/>
            <person name="Mavromatis K."/>
            <person name="Anderson I.J."/>
            <person name="Ivanova N.N."/>
            <person name="Hooper S.D."/>
            <person name="Lapidus A."/>
            <person name="Lucas S."/>
            <person name="Gonzalez B."/>
            <person name="Kyrpides N.C."/>
        </authorList>
    </citation>
    <scope>NUCLEOTIDE SEQUENCE [LARGE SCALE GENOMIC DNA]</scope>
    <source>
        <strain>JMP134 / LMG 1197</strain>
    </source>
</reference>
<dbReference type="EMBL" id="CP000090">
    <property type="protein sequence ID" value="AAZ61898.1"/>
    <property type="molecule type" value="Genomic_DNA"/>
</dbReference>
<dbReference type="SMR" id="Q46Y85"/>
<dbReference type="STRING" id="264198.Reut_A2537"/>
<dbReference type="KEGG" id="reu:Reut_A2537"/>
<dbReference type="eggNOG" id="COG0335">
    <property type="taxonomic scope" value="Bacteria"/>
</dbReference>
<dbReference type="HOGENOM" id="CLU_103507_1_0_4"/>
<dbReference type="OrthoDB" id="9803541at2"/>
<dbReference type="GO" id="GO:0022625">
    <property type="term" value="C:cytosolic large ribosomal subunit"/>
    <property type="evidence" value="ECO:0007669"/>
    <property type="project" value="TreeGrafter"/>
</dbReference>
<dbReference type="GO" id="GO:0003735">
    <property type="term" value="F:structural constituent of ribosome"/>
    <property type="evidence" value="ECO:0007669"/>
    <property type="project" value="InterPro"/>
</dbReference>
<dbReference type="GO" id="GO:0006412">
    <property type="term" value="P:translation"/>
    <property type="evidence" value="ECO:0007669"/>
    <property type="project" value="UniProtKB-UniRule"/>
</dbReference>
<dbReference type="FunFam" id="2.30.30.790:FF:000001">
    <property type="entry name" value="50S ribosomal protein L19"/>
    <property type="match status" value="1"/>
</dbReference>
<dbReference type="Gene3D" id="2.30.30.790">
    <property type="match status" value="1"/>
</dbReference>
<dbReference type="HAMAP" id="MF_00402">
    <property type="entry name" value="Ribosomal_bL19"/>
    <property type="match status" value="1"/>
</dbReference>
<dbReference type="InterPro" id="IPR001857">
    <property type="entry name" value="Ribosomal_bL19"/>
</dbReference>
<dbReference type="InterPro" id="IPR018257">
    <property type="entry name" value="Ribosomal_bL19_CS"/>
</dbReference>
<dbReference type="InterPro" id="IPR038657">
    <property type="entry name" value="Ribosomal_bL19_sf"/>
</dbReference>
<dbReference type="InterPro" id="IPR008991">
    <property type="entry name" value="Translation_prot_SH3-like_sf"/>
</dbReference>
<dbReference type="NCBIfam" id="TIGR01024">
    <property type="entry name" value="rplS_bact"/>
    <property type="match status" value="1"/>
</dbReference>
<dbReference type="PANTHER" id="PTHR15680:SF9">
    <property type="entry name" value="LARGE RIBOSOMAL SUBUNIT PROTEIN BL19M"/>
    <property type="match status" value="1"/>
</dbReference>
<dbReference type="PANTHER" id="PTHR15680">
    <property type="entry name" value="RIBOSOMAL PROTEIN L19"/>
    <property type="match status" value="1"/>
</dbReference>
<dbReference type="Pfam" id="PF01245">
    <property type="entry name" value="Ribosomal_L19"/>
    <property type="match status" value="1"/>
</dbReference>
<dbReference type="PIRSF" id="PIRSF002191">
    <property type="entry name" value="Ribosomal_L19"/>
    <property type="match status" value="1"/>
</dbReference>
<dbReference type="PRINTS" id="PR00061">
    <property type="entry name" value="RIBOSOMALL19"/>
</dbReference>
<dbReference type="SUPFAM" id="SSF50104">
    <property type="entry name" value="Translation proteins SH3-like domain"/>
    <property type="match status" value="1"/>
</dbReference>
<dbReference type="PROSITE" id="PS01015">
    <property type="entry name" value="RIBOSOMAL_L19"/>
    <property type="match status" value="1"/>
</dbReference>
<gene>
    <name evidence="1" type="primary">rplS</name>
    <name type="ordered locus">Reut_A2537</name>
</gene>
<proteinExistence type="inferred from homology"/>
<organism>
    <name type="scientific">Cupriavidus pinatubonensis (strain JMP 134 / LMG 1197)</name>
    <name type="common">Cupriavidus necator (strain JMP 134)</name>
    <dbReference type="NCBI Taxonomy" id="264198"/>
    <lineage>
        <taxon>Bacteria</taxon>
        <taxon>Pseudomonadati</taxon>
        <taxon>Pseudomonadota</taxon>
        <taxon>Betaproteobacteria</taxon>
        <taxon>Burkholderiales</taxon>
        <taxon>Burkholderiaceae</taxon>
        <taxon>Cupriavidus</taxon>
    </lineage>
</organism>
<protein>
    <recommendedName>
        <fullName evidence="1">Large ribosomal subunit protein bL19</fullName>
    </recommendedName>
    <alternativeName>
        <fullName evidence="2">50S ribosomal protein L19</fullName>
    </alternativeName>
</protein>
<feature type="chain" id="PRO_0000226867" description="Large ribosomal subunit protein bL19">
    <location>
        <begin position="1"/>
        <end position="127"/>
    </location>
</feature>
<keyword id="KW-0687">Ribonucleoprotein</keyword>
<keyword id="KW-0689">Ribosomal protein</keyword>
<evidence type="ECO:0000255" key="1">
    <source>
        <dbReference type="HAMAP-Rule" id="MF_00402"/>
    </source>
</evidence>
<evidence type="ECO:0000305" key="2"/>